<protein>
    <recommendedName>
        <fullName evidence="1">Large ribosomal subunit protein bL31</fullName>
    </recommendedName>
    <alternativeName>
        <fullName evidence="2">50S ribosomal protein L31</fullName>
    </alternativeName>
</protein>
<evidence type="ECO:0000255" key="1">
    <source>
        <dbReference type="HAMAP-Rule" id="MF_00501"/>
    </source>
</evidence>
<evidence type="ECO:0000305" key="2"/>
<proteinExistence type="inferred from homology"/>
<reference key="1">
    <citation type="submission" date="2009-03" db="EMBL/GenBank/DDBJ databases">
        <title>Brucella melitensis ATCC 23457 whole genome shotgun sequencing project.</title>
        <authorList>
            <person name="Setubal J.C."/>
            <person name="Boyle S."/>
            <person name="Crasta O.R."/>
            <person name="Gillespie J.J."/>
            <person name="Kenyon R.W."/>
            <person name="Lu J."/>
            <person name="Mane S."/>
            <person name="Nagrani S."/>
            <person name="Shallom J.M."/>
            <person name="Shallom S."/>
            <person name="Shukla M."/>
            <person name="Snyder E.E."/>
            <person name="Sobral B.W."/>
            <person name="Wattam A.R."/>
            <person name="Will R."/>
            <person name="Williams K."/>
            <person name="Yoo H."/>
            <person name="Munk C."/>
            <person name="Tapia R."/>
            <person name="Han C."/>
            <person name="Detter J.C."/>
            <person name="Bruce D."/>
            <person name="Brettin T.S."/>
        </authorList>
    </citation>
    <scope>NUCLEOTIDE SEQUENCE [LARGE SCALE GENOMIC DNA]</scope>
    <source>
        <strain>ATCC 23457</strain>
    </source>
</reference>
<organism>
    <name type="scientific">Brucella melitensis biotype 2 (strain ATCC 23457)</name>
    <dbReference type="NCBI Taxonomy" id="546272"/>
    <lineage>
        <taxon>Bacteria</taxon>
        <taxon>Pseudomonadati</taxon>
        <taxon>Pseudomonadota</taxon>
        <taxon>Alphaproteobacteria</taxon>
        <taxon>Hyphomicrobiales</taxon>
        <taxon>Brucellaceae</taxon>
        <taxon>Brucella/Ochrobactrum group</taxon>
        <taxon>Brucella</taxon>
    </lineage>
</organism>
<name>RL31_BRUMB</name>
<keyword id="KW-0687">Ribonucleoprotein</keyword>
<keyword id="KW-0689">Ribosomal protein</keyword>
<keyword id="KW-0694">RNA-binding</keyword>
<keyword id="KW-0699">rRNA-binding</keyword>
<dbReference type="EMBL" id="CP001488">
    <property type="protein sequence ID" value="ACO01450.1"/>
    <property type="molecule type" value="Genomic_DNA"/>
</dbReference>
<dbReference type="RefSeq" id="WP_002964804.1">
    <property type="nucleotide sequence ID" value="NC_012441.1"/>
</dbReference>
<dbReference type="SMR" id="C0REX8"/>
<dbReference type="GeneID" id="97533132"/>
<dbReference type="KEGG" id="bmi:BMEA_A1768"/>
<dbReference type="HOGENOM" id="CLU_114306_3_2_5"/>
<dbReference type="Proteomes" id="UP000001748">
    <property type="component" value="Chromosome I"/>
</dbReference>
<dbReference type="GO" id="GO:1990904">
    <property type="term" value="C:ribonucleoprotein complex"/>
    <property type="evidence" value="ECO:0007669"/>
    <property type="project" value="UniProtKB-KW"/>
</dbReference>
<dbReference type="GO" id="GO:0005840">
    <property type="term" value="C:ribosome"/>
    <property type="evidence" value="ECO:0007669"/>
    <property type="project" value="UniProtKB-KW"/>
</dbReference>
<dbReference type="GO" id="GO:0019843">
    <property type="term" value="F:rRNA binding"/>
    <property type="evidence" value="ECO:0007669"/>
    <property type="project" value="UniProtKB-KW"/>
</dbReference>
<dbReference type="GO" id="GO:0003735">
    <property type="term" value="F:structural constituent of ribosome"/>
    <property type="evidence" value="ECO:0007669"/>
    <property type="project" value="InterPro"/>
</dbReference>
<dbReference type="GO" id="GO:0006412">
    <property type="term" value="P:translation"/>
    <property type="evidence" value="ECO:0007669"/>
    <property type="project" value="UniProtKB-UniRule"/>
</dbReference>
<dbReference type="Gene3D" id="4.10.830.30">
    <property type="entry name" value="Ribosomal protein L31"/>
    <property type="match status" value="1"/>
</dbReference>
<dbReference type="HAMAP" id="MF_00501">
    <property type="entry name" value="Ribosomal_bL31_1"/>
    <property type="match status" value="1"/>
</dbReference>
<dbReference type="InterPro" id="IPR034704">
    <property type="entry name" value="Ribosomal_bL28/bL31-like_sf"/>
</dbReference>
<dbReference type="InterPro" id="IPR002150">
    <property type="entry name" value="Ribosomal_bL31"/>
</dbReference>
<dbReference type="InterPro" id="IPR027491">
    <property type="entry name" value="Ribosomal_bL31_A"/>
</dbReference>
<dbReference type="InterPro" id="IPR042105">
    <property type="entry name" value="Ribosomal_bL31_sf"/>
</dbReference>
<dbReference type="NCBIfam" id="TIGR00105">
    <property type="entry name" value="L31"/>
    <property type="match status" value="1"/>
</dbReference>
<dbReference type="NCBIfam" id="NF001809">
    <property type="entry name" value="PRK00528.1"/>
    <property type="match status" value="1"/>
</dbReference>
<dbReference type="PANTHER" id="PTHR33280">
    <property type="entry name" value="50S RIBOSOMAL PROTEIN L31, CHLOROPLASTIC"/>
    <property type="match status" value="1"/>
</dbReference>
<dbReference type="PANTHER" id="PTHR33280:SF6">
    <property type="entry name" value="LARGE RIBOSOMAL SUBUNIT PROTEIN BL31A"/>
    <property type="match status" value="1"/>
</dbReference>
<dbReference type="Pfam" id="PF01197">
    <property type="entry name" value="Ribosomal_L31"/>
    <property type="match status" value="1"/>
</dbReference>
<dbReference type="PRINTS" id="PR01249">
    <property type="entry name" value="RIBOSOMALL31"/>
</dbReference>
<dbReference type="SUPFAM" id="SSF143800">
    <property type="entry name" value="L28p-like"/>
    <property type="match status" value="1"/>
</dbReference>
<dbReference type="PROSITE" id="PS01143">
    <property type="entry name" value="RIBOSOMAL_L31"/>
    <property type="match status" value="1"/>
</dbReference>
<comment type="function">
    <text evidence="1">Binds the 23S rRNA.</text>
</comment>
<comment type="subunit">
    <text evidence="1">Part of the 50S ribosomal subunit.</text>
</comment>
<comment type="similarity">
    <text evidence="1">Belongs to the bacterial ribosomal protein bL31 family. Type A subfamily.</text>
</comment>
<feature type="chain" id="PRO_1000176950" description="Large ribosomal subunit protein bL31">
    <location>
        <begin position="1"/>
        <end position="73"/>
    </location>
</feature>
<sequence length="73" mass="8182">MKANIHPDYHTIKVVMTDGTEYMTRSTWGKEGDTMNLDIDPTTHPAWTGGSQTLLDRGGRVTKFKNRFGNLGI</sequence>
<gene>
    <name evidence="1" type="primary">rpmE</name>
    <name type="ordered locus">BMEA_A1768</name>
</gene>
<accession>C0REX8</accession>